<comment type="function">
    <text evidence="1">Catalyzes the reduction of the double bond of an array of alpha,beta-unsaturated aldehydes and ketones. It also reduces the nitro group of nitroester and nitroaromatic compounds. It could have a role in detoxification processes.</text>
</comment>
<comment type="catalytic activity">
    <reaction evidence="1">
        <text>A + NADPH + H(+) = AH2 + NADP(+)</text>
        <dbReference type="Rhea" id="RHEA:13149"/>
        <dbReference type="ChEBI" id="CHEBI:13193"/>
        <dbReference type="ChEBI" id="CHEBI:15378"/>
        <dbReference type="ChEBI" id="CHEBI:17499"/>
        <dbReference type="ChEBI" id="CHEBI:57783"/>
        <dbReference type="ChEBI" id="CHEBI:58349"/>
        <dbReference type="EC" id="1.6.99.1"/>
    </reaction>
</comment>
<comment type="cofactor">
    <cofactor evidence="1">
        <name>FMN</name>
        <dbReference type="ChEBI" id="CHEBI:58210"/>
    </cofactor>
</comment>
<comment type="subunit">
    <text evidence="1">Homotetramer.</text>
</comment>
<comment type="similarity">
    <text evidence="1">Belongs to the NADH:flavin oxidoreductase/NADH oxidase family. NamA subfamily.</text>
</comment>
<name>NAMA_LISMF</name>
<sequence>MSKLFSEYKLKDVTLKNRIVMSPMCMYSVENKDGIATDFHFAHYVSRAAGGTGLVILEATAVQEVGRISEFDLGLWNDEQVPALKKLVDGLHYHGAKAGIQLAHAGRKAVLPGEIVAPSAIAFDEKSDKPVELTKEAIKEVVADFKRAAYRAKEAGFDVIEIHAAHGYLIHQFLSPITNRREDNYGGPAGNRYKILSDIIKAVKEVWDGPIIVRVSATDYAHGGLQLEDHIPFAKWMKADGVELIDVSTGGLVNVAPPVFPGYQVPFADEIRRGAGIATGALGLITRGEQAEEILCNERADLIIVGRELLRNPYFAKDAAKQLGETIEGPKQYSRAWK</sequence>
<keyword id="KW-0216">Detoxification</keyword>
<keyword id="KW-0285">Flavoprotein</keyword>
<keyword id="KW-0288">FMN</keyword>
<keyword id="KW-0521">NADP</keyword>
<keyword id="KW-0560">Oxidoreductase</keyword>
<reference key="1">
    <citation type="journal article" date="2004" name="Nucleic Acids Res.">
        <title>Whole genome comparisons of serotype 4b and 1/2a strains of the food-borne pathogen Listeria monocytogenes reveal new insights into the core genome components of this species.</title>
        <authorList>
            <person name="Nelson K.E."/>
            <person name="Fouts D.E."/>
            <person name="Mongodin E.F."/>
            <person name="Ravel J."/>
            <person name="DeBoy R.T."/>
            <person name="Kolonay J.F."/>
            <person name="Rasko D.A."/>
            <person name="Angiuoli S.V."/>
            <person name="Gill S.R."/>
            <person name="Paulsen I.T."/>
            <person name="Peterson J.D."/>
            <person name="White O."/>
            <person name="Nelson W.C."/>
            <person name="Nierman W.C."/>
            <person name="Beanan M.J."/>
            <person name="Brinkac L.M."/>
            <person name="Daugherty S.C."/>
            <person name="Dodson R.J."/>
            <person name="Durkin A.S."/>
            <person name="Madupu R."/>
            <person name="Haft D.H."/>
            <person name="Selengut J."/>
            <person name="Van Aken S.E."/>
            <person name="Khouri H.M."/>
            <person name="Fedorova N."/>
            <person name="Forberger H.A."/>
            <person name="Tran B."/>
            <person name="Kathariou S."/>
            <person name="Wonderling L.D."/>
            <person name="Uhlich G.A."/>
            <person name="Bayles D.O."/>
            <person name="Luchansky J.B."/>
            <person name="Fraser C.M."/>
        </authorList>
    </citation>
    <scope>NUCLEOTIDE SEQUENCE [LARGE SCALE GENOMIC DNA]</scope>
    <source>
        <strain>F2365</strain>
    </source>
</reference>
<feature type="chain" id="PRO_0000216123" description="NADPH dehydrogenase">
    <location>
        <begin position="1"/>
        <end position="338"/>
    </location>
</feature>
<feature type="binding site" evidence="1">
    <location>
        <begin position="22"/>
        <end position="25"/>
    </location>
    <ligand>
        <name>FMN</name>
        <dbReference type="ChEBI" id="CHEBI:58210"/>
    </ligand>
</feature>
<feature type="binding site" evidence="1">
    <location>
        <position position="27"/>
    </location>
    <ligand>
        <name>substrate</name>
    </ligand>
</feature>
<feature type="binding site" evidence="1">
    <location>
        <position position="59"/>
    </location>
    <ligand>
        <name>FMN</name>
        <dbReference type="ChEBI" id="CHEBI:58210"/>
    </ligand>
</feature>
<feature type="binding site" evidence="1">
    <location>
        <position position="101"/>
    </location>
    <ligand>
        <name>FMN</name>
        <dbReference type="ChEBI" id="CHEBI:58210"/>
    </ligand>
</feature>
<feature type="binding site" evidence="1">
    <location>
        <begin position="163"/>
        <end position="166"/>
    </location>
    <ligand>
        <name>substrate</name>
    </ligand>
</feature>
<feature type="binding site" evidence="1">
    <location>
        <position position="214"/>
    </location>
    <ligand>
        <name>FMN</name>
        <dbReference type="ChEBI" id="CHEBI:58210"/>
    </ligand>
</feature>
<feature type="binding site" evidence="1">
    <location>
        <begin position="306"/>
        <end position="307"/>
    </location>
    <ligand>
        <name>FMN</name>
        <dbReference type="ChEBI" id="CHEBI:58210"/>
    </ligand>
</feature>
<proteinExistence type="inferred from homology"/>
<gene>
    <name evidence="1" type="primary">namA</name>
    <name type="ordered locus">LMOf2365_2444</name>
</gene>
<organism>
    <name type="scientific">Listeria monocytogenes serotype 4b (strain F2365)</name>
    <dbReference type="NCBI Taxonomy" id="265669"/>
    <lineage>
        <taxon>Bacteria</taxon>
        <taxon>Bacillati</taxon>
        <taxon>Bacillota</taxon>
        <taxon>Bacilli</taxon>
        <taxon>Bacillales</taxon>
        <taxon>Listeriaceae</taxon>
        <taxon>Listeria</taxon>
    </lineage>
</organism>
<dbReference type="EC" id="1.6.99.1" evidence="1"/>
<dbReference type="EMBL" id="AE017262">
    <property type="protein sequence ID" value="AAT05209.1"/>
    <property type="molecule type" value="Genomic_DNA"/>
</dbReference>
<dbReference type="RefSeq" id="WP_003725406.1">
    <property type="nucleotide sequence ID" value="NC_002973.6"/>
</dbReference>
<dbReference type="SMR" id="Q71WV6"/>
<dbReference type="KEGG" id="lmf:LMOf2365_2444"/>
<dbReference type="HOGENOM" id="CLU_012153_2_1_9"/>
<dbReference type="GO" id="GO:0010181">
    <property type="term" value="F:FMN binding"/>
    <property type="evidence" value="ECO:0007669"/>
    <property type="project" value="UniProtKB-UniRule"/>
</dbReference>
<dbReference type="GO" id="GO:0050661">
    <property type="term" value="F:NADP binding"/>
    <property type="evidence" value="ECO:0007669"/>
    <property type="project" value="UniProtKB-UniRule"/>
</dbReference>
<dbReference type="GO" id="GO:0003959">
    <property type="term" value="F:NADPH dehydrogenase activity"/>
    <property type="evidence" value="ECO:0007669"/>
    <property type="project" value="UniProtKB-UniRule"/>
</dbReference>
<dbReference type="GO" id="GO:0009636">
    <property type="term" value="P:response to toxic substance"/>
    <property type="evidence" value="ECO:0007669"/>
    <property type="project" value="UniProtKB-KW"/>
</dbReference>
<dbReference type="CDD" id="cd02932">
    <property type="entry name" value="OYE_YqiM_FMN"/>
    <property type="match status" value="1"/>
</dbReference>
<dbReference type="FunFam" id="3.20.20.70:FF:000299">
    <property type="entry name" value="NADPH dehydrogenase"/>
    <property type="match status" value="1"/>
</dbReference>
<dbReference type="Gene3D" id="3.20.20.70">
    <property type="entry name" value="Aldolase class I"/>
    <property type="match status" value="1"/>
</dbReference>
<dbReference type="HAMAP" id="MF_01614">
    <property type="entry name" value="NamA"/>
    <property type="match status" value="1"/>
</dbReference>
<dbReference type="InterPro" id="IPR013785">
    <property type="entry name" value="Aldolase_TIM"/>
</dbReference>
<dbReference type="InterPro" id="IPR023663">
    <property type="entry name" value="NADPH_DH_bac"/>
</dbReference>
<dbReference type="InterPro" id="IPR001155">
    <property type="entry name" value="OxRdtase_FMN_N"/>
</dbReference>
<dbReference type="InterPro" id="IPR044152">
    <property type="entry name" value="YqjM-like"/>
</dbReference>
<dbReference type="NCBIfam" id="NF010047">
    <property type="entry name" value="PRK13523.1"/>
    <property type="match status" value="1"/>
</dbReference>
<dbReference type="PANTHER" id="PTHR43303">
    <property type="entry name" value="NADPH DEHYDROGENASE C23G7.10C-RELATED"/>
    <property type="match status" value="1"/>
</dbReference>
<dbReference type="PANTHER" id="PTHR43303:SF4">
    <property type="entry name" value="NADPH DEHYDROGENASE C23G7.10C-RELATED"/>
    <property type="match status" value="1"/>
</dbReference>
<dbReference type="Pfam" id="PF00724">
    <property type="entry name" value="Oxidored_FMN"/>
    <property type="match status" value="1"/>
</dbReference>
<dbReference type="SUPFAM" id="SSF51395">
    <property type="entry name" value="FMN-linked oxidoreductases"/>
    <property type="match status" value="1"/>
</dbReference>
<accession>Q71WV6</accession>
<evidence type="ECO:0000255" key="1">
    <source>
        <dbReference type="HAMAP-Rule" id="MF_01614"/>
    </source>
</evidence>
<protein>
    <recommendedName>
        <fullName evidence="1">NADPH dehydrogenase</fullName>
        <ecNumber evidence="1">1.6.99.1</ecNumber>
    </recommendedName>
</protein>